<name>ACEK_PECAS</name>
<feature type="chain" id="PRO_0000057901" description="Isocitrate dehydrogenase kinase/phosphatase">
    <location>
        <begin position="1"/>
        <end position="591"/>
    </location>
</feature>
<feature type="active site" evidence="1">
    <location>
        <position position="371"/>
    </location>
</feature>
<feature type="binding site" evidence="1">
    <location>
        <begin position="315"/>
        <end position="321"/>
    </location>
    <ligand>
        <name>ATP</name>
        <dbReference type="ChEBI" id="CHEBI:30616"/>
    </ligand>
</feature>
<feature type="binding site" evidence="1">
    <location>
        <position position="336"/>
    </location>
    <ligand>
        <name>ATP</name>
        <dbReference type="ChEBI" id="CHEBI:30616"/>
    </ligand>
</feature>
<dbReference type="EC" id="2.7.11.5" evidence="1"/>
<dbReference type="EC" id="3.1.3.-" evidence="1"/>
<dbReference type="EMBL" id="BX950851">
    <property type="protein sequence ID" value="CAG76886.1"/>
    <property type="status" value="ALT_INIT"/>
    <property type="molecule type" value="Genomic_DNA"/>
</dbReference>
<dbReference type="RefSeq" id="WP_043878098.1">
    <property type="nucleotide sequence ID" value="NC_004547.2"/>
</dbReference>
<dbReference type="SMR" id="Q6D012"/>
<dbReference type="STRING" id="218491.ECA3989"/>
<dbReference type="KEGG" id="eca:ECA3989"/>
<dbReference type="PATRIC" id="fig|218491.5.peg.4052"/>
<dbReference type="eggNOG" id="COG4579">
    <property type="taxonomic scope" value="Bacteria"/>
</dbReference>
<dbReference type="HOGENOM" id="CLU_033804_1_1_6"/>
<dbReference type="OrthoDB" id="5287793at2"/>
<dbReference type="Proteomes" id="UP000007966">
    <property type="component" value="Chromosome"/>
</dbReference>
<dbReference type="GO" id="GO:0005737">
    <property type="term" value="C:cytoplasm"/>
    <property type="evidence" value="ECO:0007669"/>
    <property type="project" value="UniProtKB-SubCell"/>
</dbReference>
<dbReference type="GO" id="GO:0008772">
    <property type="term" value="F:[isocitrate dehydrogenase (NADP+)] kinase activity"/>
    <property type="evidence" value="ECO:0007669"/>
    <property type="project" value="UniProtKB-UniRule"/>
</dbReference>
<dbReference type="GO" id="GO:0016208">
    <property type="term" value="F:AMP binding"/>
    <property type="evidence" value="ECO:0007669"/>
    <property type="project" value="TreeGrafter"/>
</dbReference>
<dbReference type="GO" id="GO:0005524">
    <property type="term" value="F:ATP binding"/>
    <property type="evidence" value="ECO:0007669"/>
    <property type="project" value="UniProtKB-UniRule"/>
</dbReference>
<dbReference type="GO" id="GO:0004721">
    <property type="term" value="F:phosphoprotein phosphatase activity"/>
    <property type="evidence" value="ECO:0007669"/>
    <property type="project" value="UniProtKB-KW"/>
</dbReference>
<dbReference type="GO" id="GO:0004674">
    <property type="term" value="F:protein serine/threonine kinase activity"/>
    <property type="evidence" value="ECO:0007669"/>
    <property type="project" value="UniProtKB-KW"/>
</dbReference>
<dbReference type="GO" id="GO:0006006">
    <property type="term" value="P:glucose metabolic process"/>
    <property type="evidence" value="ECO:0007669"/>
    <property type="project" value="InterPro"/>
</dbReference>
<dbReference type="GO" id="GO:0006097">
    <property type="term" value="P:glyoxylate cycle"/>
    <property type="evidence" value="ECO:0007669"/>
    <property type="project" value="UniProtKB-UniRule"/>
</dbReference>
<dbReference type="GO" id="GO:0006099">
    <property type="term" value="P:tricarboxylic acid cycle"/>
    <property type="evidence" value="ECO:0007669"/>
    <property type="project" value="UniProtKB-UniRule"/>
</dbReference>
<dbReference type="HAMAP" id="MF_00747">
    <property type="entry name" value="AceK"/>
    <property type="match status" value="1"/>
</dbReference>
<dbReference type="InterPro" id="IPR046855">
    <property type="entry name" value="AceK_kinase"/>
</dbReference>
<dbReference type="InterPro" id="IPR046854">
    <property type="entry name" value="AceK_regulatory"/>
</dbReference>
<dbReference type="InterPro" id="IPR010452">
    <property type="entry name" value="Isocitrate_DH_AceK"/>
</dbReference>
<dbReference type="NCBIfam" id="NF002804">
    <property type="entry name" value="PRK02946.1"/>
    <property type="match status" value="1"/>
</dbReference>
<dbReference type="PANTHER" id="PTHR39559">
    <property type="match status" value="1"/>
</dbReference>
<dbReference type="PANTHER" id="PTHR39559:SF1">
    <property type="entry name" value="ISOCITRATE DEHYDROGENASE KINASE_PHOSPHATASE"/>
    <property type="match status" value="1"/>
</dbReference>
<dbReference type="Pfam" id="PF06315">
    <property type="entry name" value="AceK_kinase"/>
    <property type="match status" value="1"/>
</dbReference>
<dbReference type="Pfam" id="PF20423">
    <property type="entry name" value="AceK_regulatory"/>
    <property type="match status" value="1"/>
</dbReference>
<dbReference type="PIRSF" id="PIRSF000719">
    <property type="entry name" value="AceK"/>
    <property type="match status" value="1"/>
</dbReference>
<gene>
    <name evidence="1" type="primary">aceK</name>
    <name type="ordered locus">ECA3989</name>
</gene>
<reference key="1">
    <citation type="journal article" date="2004" name="Proc. Natl. Acad. Sci. U.S.A.">
        <title>Genome sequence of the enterobacterial phytopathogen Erwinia carotovora subsp. atroseptica and characterization of virulence factors.</title>
        <authorList>
            <person name="Bell K.S."/>
            <person name="Sebaihia M."/>
            <person name="Pritchard L."/>
            <person name="Holden M.T.G."/>
            <person name="Hyman L.J."/>
            <person name="Holeva M.C."/>
            <person name="Thomson N.R."/>
            <person name="Bentley S.D."/>
            <person name="Churcher L.J.C."/>
            <person name="Mungall K."/>
            <person name="Atkin R."/>
            <person name="Bason N."/>
            <person name="Brooks K."/>
            <person name="Chillingworth T."/>
            <person name="Clark K."/>
            <person name="Doggett J."/>
            <person name="Fraser A."/>
            <person name="Hance Z."/>
            <person name="Hauser H."/>
            <person name="Jagels K."/>
            <person name="Moule S."/>
            <person name="Norbertczak H."/>
            <person name="Ormond D."/>
            <person name="Price C."/>
            <person name="Quail M.A."/>
            <person name="Sanders M."/>
            <person name="Walker D."/>
            <person name="Whitehead S."/>
            <person name="Salmond G.P.C."/>
            <person name="Birch P.R.J."/>
            <person name="Parkhill J."/>
            <person name="Toth I.K."/>
        </authorList>
    </citation>
    <scope>NUCLEOTIDE SEQUENCE [LARGE SCALE GENOMIC DNA]</scope>
    <source>
        <strain>SCRI 1043 / ATCC BAA-672</strain>
    </source>
</reference>
<proteinExistence type="inferred from homology"/>
<organism>
    <name type="scientific">Pectobacterium atrosepticum (strain SCRI 1043 / ATCC BAA-672)</name>
    <name type="common">Erwinia carotovora subsp. atroseptica</name>
    <dbReference type="NCBI Taxonomy" id="218491"/>
    <lineage>
        <taxon>Bacteria</taxon>
        <taxon>Pseudomonadati</taxon>
        <taxon>Pseudomonadota</taxon>
        <taxon>Gammaproteobacteria</taxon>
        <taxon>Enterobacterales</taxon>
        <taxon>Pectobacteriaceae</taxon>
        <taxon>Pectobacterium</taxon>
    </lineage>
</organism>
<sequence length="591" mass="69173">MTRDLEKLVAQTILQGFDAQYGRFLEVTAGAQQRFEQADWPAVQQAMKQRIHLYDHHVGLVVAQLRCITGIRCDDADFLARMKHIYTGLLPDYPRFEIAESFFNSVYCRLFNHRELAPDKLFVFSSQPEKRFHEIPRPIAKTFVPTDGWQRMLEKLLGDVPLRLPWEDLPRDIDYIVTYLQSTFSAEQLEQATLQVANELFYRNKAAWLAGKLSLPDGVFPFLLPIHHNERGALFIDTCLTAQADASMVFGFARSYFMVYAPQPSALVAWLRDILPGKTTAELYLAIGCQKHSKTEYYREYLHYIAESEEQFIIAPGVKGMVMLVFTLPSFDRVFKVIKDRFAPQKEVSAERVMACYQLVKEHDRVGRMADTQEYENFVIDKHRISPELLDELWREVPEKLEDLGDQLVIRHLYMERRMTPLNLYLEQANAQQLHDVIEEYGNAIKQLAAANIFPGDMLFKNFGVTRHGRVVFYDYDEICYMTEVNFRKIPPPRYLEDELAAEPWYSVAPNDVFPEEFPHFLCSDRHIRTLFEEMHGDLFCADYWRALQQRIREGHIEDVYAYRRRKRFSQRAEPLYITTENDSGLCRYPA</sequence>
<comment type="function">
    <text evidence="1">Bifunctional enzyme which can phosphorylate or dephosphorylate isocitrate dehydrogenase (IDH) on a specific serine residue. This is a regulatory mechanism which enables bacteria to bypass the Krebs cycle via the glyoxylate shunt in response to the source of carbon. When bacteria are grown on glucose, IDH is fully active and unphosphorylated, but when grown on acetate or ethanol, the activity of IDH declines drastically concomitant with its phosphorylation.</text>
</comment>
<comment type="catalytic activity">
    <reaction evidence="1">
        <text>L-seryl-[isocitrate dehydrogenase] + ATP = O-phospho-L-seryl-[isocitrate dehydrogenase] + ADP + H(+)</text>
        <dbReference type="Rhea" id="RHEA:43540"/>
        <dbReference type="Rhea" id="RHEA-COMP:10605"/>
        <dbReference type="Rhea" id="RHEA-COMP:10606"/>
        <dbReference type="ChEBI" id="CHEBI:15378"/>
        <dbReference type="ChEBI" id="CHEBI:29999"/>
        <dbReference type="ChEBI" id="CHEBI:30616"/>
        <dbReference type="ChEBI" id="CHEBI:83421"/>
        <dbReference type="ChEBI" id="CHEBI:456216"/>
        <dbReference type="EC" id="2.7.11.5"/>
    </reaction>
</comment>
<comment type="subcellular location">
    <subcellularLocation>
        <location evidence="1">Cytoplasm</location>
    </subcellularLocation>
</comment>
<comment type="similarity">
    <text evidence="1">Belongs to the AceK family.</text>
</comment>
<comment type="sequence caution" evidence="2">
    <conflict type="erroneous initiation">
        <sequence resource="EMBL-CDS" id="CAG76886"/>
    </conflict>
</comment>
<keyword id="KW-0067">ATP-binding</keyword>
<keyword id="KW-0963">Cytoplasm</keyword>
<keyword id="KW-0329">Glyoxylate bypass</keyword>
<keyword id="KW-0378">Hydrolase</keyword>
<keyword id="KW-0418">Kinase</keyword>
<keyword id="KW-0547">Nucleotide-binding</keyword>
<keyword id="KW-0904">Protein phosphatase</keyword>
<keyword id="KW-1185">Reference proteome</keyword>
<keyword id="KW-0723">Serine/threonine-protein kinase</keyword>
<keyword id="KW-0808">Transferase</keyword>
<keyword id="KW-0816">Tricarboxylic acid cycle</keyword>
<protein>
    <recommendedName>
        <fullName evidence="1">Isocitrate dehydrogenase kinase/phosphatase</fullName>
        <shortName evidence="1">IDH kinase/phosphatase</shortName>
        <shortName evidence="1">IDHK/P</shortName>
        <ecNumber evidence="1">2.7.11.5</ecNumber>
        <ecNumber evidence="1">3.1.3.-</ecNumber>
    </recommendedName>
</protein>
<evidence type="ECO:0000255" key="1">
    <source>
        <dbReference type="HAMAP-Rule" id="MF_00747"/>
    </source>
</evidence>
<evidence type="ECO:0000305" key="2"/>
<accession>Q6D012</accession>